<keyword id="KW-0067">ATP-binding</keyword>
<keyword id="KW-0378">Hydrolase</keyword>
<keyword id="KW-0547">Nucleotide-binding</keyword>
<accession>A1TSY0</accession>
<sequence>MHIDLNSDLGESLGAWRMGDDAAMLGIVTSANVACGFHAGDAAGILATLRGAKERGVAVGAHVAYRDLAGFGRRNMDVASADLVADVIYQIGALQGLATAAGTRVTYVKPHGALYNTIARDARQARDVIAAIRAIDASLALVVLAGSPLERWAADAGLRVVAEAFADRAYTPQGTLVSRREPGAVLHDAGEVARRMLQLVREGTVRAIDGSTTRVRADSICVHGDSPGAVDMARAVRGALEREGIALRPFA</sequence>
<reference key="1">
    <citation type="submission" date="2006-12" db="EMBL/GenBank/DDBJ databases">
        <title>Complete sequence of Acidovorax avenae subsp. citrulli AAC00-1.</title>
        <authorList>
            <person name="Copeland A."/>
            <person name="Lucas S."/>
            <person name="Lapidus A."/>
            <person name="Barry K."/>
            <person name="Detter J.C."/>
            <person name="Glavina del Rio T."/>
            <person name="Dalin E."/>
            <person name="Tice H."/>
            <person name="Pitluck S."/>
            <person name="Kiss H."/>
            <person name="Brettin T."/>
            <person name="Bruce D."/>
            <person name="Han C."/>
            <person name="Tapia R."/>
            <person name="Gilna P."/>
            <person name="Schmutz J."/>
            <person name="Larimer F."/>
            <person name="Land M."/>
            <person name="Hauser L."/>
            <person name="Kyrpides N."/>
            <person name="Kim E."/>
            <person name="Stahl D."/>
            <person name="Richardson P."/>
        </authorList>
    </citation>
    <scope>NUCLEOTIDE SEQUENCE [LARGE SCALE GENOMIC DNA]</scope>
    <source>
        <strain>AAC00-1</strain>
    </source>
</reference>
<feature type="chain" id="PRO_1000045185" description="5-oxoprolinase subunit A">
    <location>
        <begin position="1"/>
        <end position="251"/>
    </location>
</feature>
<organism>
    <name type="scientific">Paracidovorax citrulli (strain AAC00-1)</name>
    <name type="common">Acidovorax citrulli</name>
    <dbReference type="NCBI Taxonomy" id="397945"/>
    <lineage>
        <taxon>Bacteria</taxon>
        <taxon>Pseudomonadati</taxon>
        <taxon>Pseudomonadota</taxon>
        <taxon>Betaproteobacteria</taxon>
        <taxon>Burkholderiales</taxon>
        <taxon>Comamonadaceae</taxon>
        <taxon>Paracidovorax</taxon>
    </lineage>
</organism>
<comment type="function">
    <text evidence="1">Catalyzes the cleavage of 5-oxoproline to form L-glutamate coupled to the hydrolysis of ATP to ADP and inorganic phosphate.</text>
</comment>
<comment type="catalytic activity">
    <reaction evidence="1">
        <text>5-oxo-L-proline + ATP + 2 H2O = L-glutamate + ADP + phosphate + H(+)</text>
        <dbReference type="Rhea" id="RHEA:10348"/>
        <dbReference type="ChEBI" id="CHEBI:15377"/>
        <dbReference type="ChEBI" id="CHEBI:15378"/>
        <dbReference type="ChEBI" id="CHEBI:29985"/>
        <dbReference type="ChEBI" id="CHEBI:30616"/>
        <dbReference type="ChEBI" id="CHEBI:43474"/>
        <dbReference type="ChEBI" id="CHEBI:58402"/>
        <dbReference type="ChEBI" id="CHEBI:456216"/>
        <dbReference type="EC" id="3.5.2.9"/>
    </reaction>
</comment>
<comment type="subunit">
    <text evidence="1">Forms a complex composed of PxpA, PxpB and PxpC.</text>
</comment>
<comment type="similarity">
    <text evidence="1">Belongs to the LamB/PxpA family.</text>
</comment>
<gene>
    <name evidence="1" type="primary">pxpA</name>
    <name type="ordered locus">Aave_3513</name>
</gene>
<name>PXPA_PARC0</name>
<dbReference type="EC" id="3.5.2.9" evidence="1"/>
<dbReference type="EMBL" id="CP000512">
    <property type="protein sequence ID" value="ABM34068.1"/>
    <property type="molecule type" value="Genomic_DNA"/>
</dbReference>
<dbReference type="RefSeq" id="WP_011796565.1">
    <property type="nucleotide sequence ID" value="NC_008752.1"/>
</dbReference>
<dbReference type="SMR" id="A1TSY0"/>
<dbReference type="STRING" id="397945.Aave_3513"/>
<dbReference type="GeneID" id="79791603"/>
<dbReference type="KEGG" id="aav:Aave_3513"/>
<dbReference type="eggNOG" id="COG1540">
    <property type="taxonomic scope" value="Bacteria"/>
</dbReference>
<dbReference type="HOGENOM" id="CLU_069535_0_0_4"/>
<dbReference type="OrthoDB" id="9773478at2"/>
<dbReference type="Proteomes" id="UP000002596">
    <property type="component" value="Chromosome"/>
</dbReference>
<dbReference type="GO" id="GO:0017168">
    <property type="term" value="F:5-oxoprolinase (ATP-hydrolyzing) activity"/>
    <property type="evidence" value="ECO:0007669"/>
    <property type="project" value="UniProtKB-UniRule"/>
</dbReference>
<dbReference type="GO" id="GO:0005524">
    <property type="term" value="F:ATP binding"/>
    <property type="evidence" value="ECO:0007669"/>
    <property type="project" value="UniProtKB-UniRule"/>
</dbReference>
<dbReference type="GO" id="GO:0005975">
    <property type="term" value="P:carbohydrate metabolic process"/>
    <property type="evidence" value="ECO:0007669"/>
    <property type="project" value="InterPro"/>
</dbReference>
<dbReference type="CDD" id="cd10787">
    <property type="entry name" value="LamB_YcsF_like"/>
    <property type="match status" value="1"/>
</dbReference>
<dbReference type="Gene3D" id="3.20.20.370">
    <property type="entry name" value="Glycoside hydrolase/deacetylase"/>
    <property type="match status" value="1"/>
</dbReference>
<dbReference type="HAMAP" id="MF_00691">
    <property type="entry name" value="PxpA"/>
    <property type="match status" value="1"/>
</dbReference>
<dbReference type="InterPro" id="IPR011330">
    <property type="entry name" value="Glyco_hydro/deAcase_b/a-brl"/>
</dbReference>
<dbReference type="InterPro" id="IPR005501">
    <property type="entry name" value="LamB/YcsF/PxpA-like"/>
</dbReference>
<dbReference type="NCBIfam" id="NF003814">
    <property type="entry name" value="PRK05406.1-3"/>
    <property type="match status" value="1"/>
</dbReference>
<dbReference type="NCBIfam" id="NF003816">
    <property type="entry name" value="PRK05406.1-5"/>
    <property type="match status" value="1"/>
</dbReference>
<dbReference type="PANTHER" id="PTHR30292:SF0">
    <property type="entry name" value="5-OXOPROLINASE SUBUNIT A"/>
    <property type="match status" value="1"/>
</dbReference>
<dbReference type="PANTHER" id="PTHR30292">
    <property type="entry name" value="UNCHARACTERIZED PROTEIN YBGL-RELATED"/>
    <property type="match status" value="1"/>
</dbReference>
<dbReference type="Pfam" id="PF03746">
    <property type="entry name" value="LamB_YcsF"/>
    <property type="match status" value="1"/>
</dbReference>
<dbReference type="SUPFAM" id="SSF88713">
    <property type="entry name" value="Glycoside hydrolase/deacetylase"/>
    <property type="match status" value="1"/>
</dbReference>
<proteinExistence type="inferred from homology"/>
<evidence type="ECO:0000255" key="1">
    <source>
        <dbReference type="HAMAP-Rule" id="MF_00691"/>
    </source>
</evidence>
<protein>
    <recommendedName>
        <fullName evidence="1">5-oxoprolinase subunit A</fullName>
        <shortName evidence="1">5-OPase subunit A</shortName>
        <ecNumber evidence="1">3.5.2.9</ecNumber>
    </recommendedName>
    <alternativeName>
        <fullName evidence="1">5-oxoprolinase (ATP-hydrolyzing) subunit A</fullName>
    </alternativeName>
</protein>